<gene>
    <name type="primary">NAT2</name>
    <name type="synonym">AAC2</name>
</gene>
<dbReference type="EC" id="2.3.1.5" evidence="3 13"/>
<dbReference type="EC" id="2.3.1.118" evidence="3 13"/>
<dbReference type="EMBL" id="X14672">
    <property type="protein sequence ID" value="CAA32802.1"/>
    <property type="molecule type" value="Genomic_DNA"/>
</dbReference>
<dbReference type="EMBL" id="D90040">
    <property type="protein sequence ID" value="BAA14094.1"/>
    <property type="molecule type" value="mRNA"/>
</dbReference>
<dbReference type="EMBL" id="D90042">
    <property type="protein sequence ID" value="BAA14096.1"/>
    <property type="molecule type" value="mRNA"/>
</dbReference>
<dbReference type="EMBL" id="D10870">
    <property type="protein sequence ID" value="BAA01640.1"/>
    <property type="molecule type" value="Genomic_DNA"/>
</dbReference>
<dbReference type="EMBL" id="D10871">
    <property type="protein sequence ID" value="BAA01641.1"/>
    <property type="molecule type" value="Genomic_DNA"/>
</dbReference>
<dbReference type="EMBL" id="D10872">
    <property type="protein sequence ID" value="BAA01642.1"/>
    <property type="molecule type" value="Genomic_DNA"/>
</dbReference>
<dbReference type="EMBL" id="U23052">
    <property type="protein sequence ID" value="AAA64584.1"/>
    <property type="molecule type" value="Genomic_DNA"/>
</dbReference>
<dbReference type="EMBL" id="U23434">
    <property type="protein sequence ID" value="AAA64585.1"/>
    <property type="molecule type" value="Genomic_DNA"/>
</dbReference>
<dbReference type="EMBL" id="DQ305496">
    <property type="protein sequence ID" value="ABC26032.1"/>
    <property type="molecule type" value="Genomic_DNA"/>
</dbReference>
<dbReference type="EMBL" id="DQ305497">
    <property type="protein sequence ID" value="ABC26033.1"/>
    <property type="molecule type" value="Genomic_DNA"/>
</dbReference>
<dbReference type="EMBL" id="DQ305498">
    <property type="protein sequence ID" value="ABC26034.1"/>
    <property type="molecule type" value="Genomic_DNA"/>
</dbReference>
<dbReference type="EMBL" id="DQ305499">
    <property type="protein sequence ID" value="ABC26035.1"/>
    <property type="molecule type" value="Genomic_DNA"/>
</dbReference>
<dbReference type="EMBL" id="DQ305500">
    <property type="protein sequence ID" value="ABC26036.1"/>
    <property type="molecule type" value="Genomic_DNA"/>
</dbReference>
<dbReference type="EMBL" id="DQ305501">
    <property type="protein sequence ID" value="ABC26037.1"/>
    <property type="molecule type" value="Genomic_DNA"/>
</dbReference>
<dbReference type="EMBL" id="DQ305502">
    <property type="protein sequence ID" value="ABC26038.1"/>
    <property type="molecule type" value="Genomic_DNA"/>
</dbReference>
<dbReference type="EMBL" id="DQ305503">
    <property type="protein sequence ID" value="ABC26039.1"/>
    <property type="molecule type" value="Genomic_DNA"/>
</dbReference>
<dbReference type="EMBL" id="DQ305504">
    <property type="protein sequence ID" value="ABC26040.1"/>
    <property type="molecule type" value="Genomic_DNA"/>
</dbReference>
<dbReference type="EMBL" id="DQ305505">
    <property type="protein sequence ID" value="ABC26041.1"/>
    <property type="molecule type" value="Genomic_DNA"/>
</dbReference>
<dbReference type="EMBL" id="DQ305506">
    <property type="protein sequence ID" value="ABC26042.1"/>
    <property type="molecule type" value="Genomic_DNA"/>
</dbReference>
<dbReference type="EMBL" id="DQ305507">
    <property type="protein sequence ID" value="ABC26043.1"/>
    <property type="molecule type" value="Genomic_DNA"/>
</dbReference>
<dbReference type="EMBL" id="DQ305508">
    <property type="protein sequence ID" value="ABC26044.1"/>
    <property type="molecule type" value="Genomic_DNA"/>
</dbReference>
<dbReference type="EMBL" id="DQ305509">
    <property type="protein sequence ID" value="ABC26045.1"/>
    <property type="molecule type" value="Genomic_DNA"/>
</dbReference>
<dbReference type="EMBL" id="DQ305510">
    <property type="protein sequence ID" value="ABC26046.1"/>
    <property type="molecule type" value="Genomic_DNA"/>
</dbReference>
<dbReference type="EMBL" id="DQ305511">
    <property type="protein sequence ID" value="ABC26047.1"/>
    <property type="molecule type" value="Genomic_DNA"/>
</dbReference>
<dbReference type="EMBL" id="DQ305512">
    <property type="protein sequence ID" value="ABC26048.1"/>
    <property type="molecule type" value="Genomic_DNA"/>
</dbReference>
<dbReference type="EMBL" id="DQ305513">
    <property type="protein sequence ID" value="ABC26049.1"/>
    <property type="molecule type" value="Genomic_DNA"/>
</dbReference>
<dbReference type="EMBL" id="DQ305514">
    <property type="protein sequence ID" value="ABC26050.1"/>
    <property type="molecule type" value="Genomic_DNA"/>
</dbReference>
<dbReference type="EMBL" id="DQ305515">
    <property type="protein sequence ID" value="ABC26051.1"/>
    <property type="molecule type" value="Genomic_DNA"/>
</dbReference>
<dbReference type="EMBL" id="DQ305516">
    <property type="protein sequence ID" value="ABC26052.1"/>
    <property type="molecule type" value="Genomic_DNA"/>
</dbReference>
<dbReference type="EMBL" id="DQ305517">
    <property type="protein sequence ID" value="ABC26053.1"/>
    <property type="molecule type" value="Genomic_DNA"/>
</dbReference>
<dbReference type="EMBL" id="DQ305518">
    <property type="protein sequence ID" value="ABC26054.1"/>
    <property type="molecule type" value="Genomic_DNA"/>
</dbReference>
<dbReference type="EMBL" id="DQ305519">
    <property type="protein sequence ID" value="ABC26055.1"/>
    <property type="molecule type" value="Genomic_DNA"/>
</dbReference>
<dbReference type="EMBL" id="DQ305520">
    <property type="protein sequence ID" value="ABC26056.1"/>
    <property type="molecule type" value="Genomic_DNA"/>
</dbReference>
<dbReference type="EMBL" id="DQ305521">
    <property type="protein sequence ID" value="ABC26057.1"/>
    <property type="molecule type" value="Genomic_DNA"/>
</dbReference>
<dbReference type="EMBL" id="DQ305522">
    <property type="protein sequence ID" value="ABC26058.1"/>
    <property type="molecule type" value="Genomic_DNA"/>
</dbReference>
<dbReference type="EMBL" id="DQ305523">
    <property type="protein sequence ID" value="ABC26059.1"/>
    <property type="molecule type" value="Genomic_DNA"/>
</dbReference>
<dbReference type="EMBL" id="DQ305524">
    <property type="protein sequence ID" value="ABC26060.1"/>
    <property type="molecule type" value="Genomic_DNA"/>
</dbReference>
<dbReference type="EMBL" id="DQ305525">
    <property type="protein sequence ID" value="ABC26061.1"/>
    <property type="molecule type" value="Genomic_DNA"/>
</dbReference>
<dbReference type="EMBL" id="DQ305526">
    <property type="protein sequence ID" value="ABC26062.1"/>
    <property type="molecule type" value="Genomic_DNA"/>
</dbReference>
<dbReference type="EMBL" id="DQ305527">
    <property type="protein sequence ID" value="ABC26063.1"/>
    <property type="molecule type" value="Genomic_DNA"/>
</dbReference>
<dbReference type="EMBL" id="DQ305528">
    <property type="protein sequence ID" value="ABC26064.1"/>
    <property type="molecule type" value="Genomic_DNA"/>
</dbReference>
<dbReference type="EMBL" id="DQ305529">
    <property type="protein sequence ID" value="ABC26065.1"/>
    <property type="molecule type" value="Genomic_DNA"/>
</dbReference>
<dbReference type="EMBL" id="DQ305530">
    <property type="protein sequence ID" value="ABC26066.1"/>
    <property type="molecule type" value="Genomic_DNA"/>
</dbReference>
<dbReference type="EMBL" id="DQ305531">
    <property type="protein sequence ID" value="ABC26067.1"/>
    <property type="molecule type" value="Genomic_DNA"/>
</dbReference>
<dbReference type="EMBL" id="DQ305532">
    <property type="protein sequence ID" value="ABC26068.1"/>
    <property type="molecule type" value="Genomic_DNA"/>
</dbReference>
<dbReference type="EMBL" id="DQ305533">
    <property type="protein sequence ID" value="ABC26069.1"/>
    <property type="molecule type" value="Genomic_DNA"/>
</dbReference>
<dbReference type="EMBL" id="DQ305534">
    <property type="protein sequence ID" value="ABC26070.1"/>
    <property type="molecule type" value="Genomic_DNA"/>
</dbReference>
<dbReference type="EMBL" id="DQ305535">
    <property type="protein sequence ID" value="ABC26071.1"/>
    <property type="molecule type" value="Genomic_DNA"/>
</dbReference>
<dbReference type="EMBL" id="DQ305536">
    <property type="protein sequence ID" value="ABC26072.1"/>
    <property type="molecule type" value="Genomic_DNA"/>
</dbReference>
<dbReference type="EMBL" id="DQ305537">
    <property type="protein sequence ID" value="ABC26073.1"/>
    <property type="molecule type" value="Genomic_DNA"/>
</dbReference>
<dbReference type="EMBL" id="DQ305538">
    <property type="protein sequence ID" value="ABC26074.1"/>
    <property type="molecule type" value="Genomic_DNA"/>
</dbReference>
<dbReference type="EMBL" id="DQ305539">
    <property type="protein sequence ID" value="ABC26075.1"/>
    <property type="molecule type" value="Genomic_DNA"/>
</dbReference>
<dbReference type="EMBL" id="DQ305540">
    <property type="protein sequence ID" value="ABC26076.1"/>
    <property type="molecule type" value="Genomic_DNA"/>
</dbReference>
<dbReference type="EMBL" id="DQ305541">
    <property type="protein sequence ID" value="ABC26077.1"/>
    <property type="molecule type" value="Genomic_DNA"/>
</dbReference>
<dbReference type="EMBL" id="DQ305542">
    <property type="protein sequence ID" value="ABC26078.1"/>
    <property type="molecule type" value="Genomic_DNA"/>
</dbReference>
<dbReference type="EMBL" id="DQ305543">
    <property type="protein sequence ID" value="ABC26079.1"/>
    <property type="molecule type" value="Genomic_DNA"/>
</dbReference>
<dbReference type="EMBL" id="DQ305544">
    <property type="protein sequence ID" value="ABC26080.1"/>
    <property type="molecule type" value="Genomic_DNA"/>
</dbReference>
<dbReference type="EMBL" id="DQ305545">
    <property type="protein sequence ID" value="ABC26081.1"/>
    <property type="molecule type" value="Genomic_DNA"/>
</dbReference>
<dbReference type="EMBL" id="DQ305546">
    <property type="protein sequence ID" value="ABC26082.1"/>
    <property type="molecule type" value="Genomic_DNA"/>
</dbReference>
<dbReference type="EMBL" id="DQ305547">
    <property type="protein sequence ID" value="ABC26083.1"/>
    <property type="molecule type" value="Genomic_DNA"/>
</dbReference>
<dbReference type="EMBL" id="DQ305548">
    <property type="protein sequence ID" value="ABC26084.1"/>
    <property type="molecule type" value="Genomic_DNA"/>
</dbReference>
<dbReference type="EMBL" id="DQ305549">
    <property type="protein sequence ID" value="ABC26085.1"/>
    <property type="molecule type" value="Genomic_DNA"/>
</dbReference>
<dbReference type="EMBL" id="DQ305550">
    <property type="protein sequence ID" value="ABC26086.1"/>
    <property type="molecule type" value="Genomic_DNA"/>
</dbReference>
<dbReference type="EMBL" id="DQ305551">
    <property type="protein sequence ID" value="ABC26087.1"/>
    <property type="molecule type" value="Genomic_DNA"/>
</dbReference>
<dbReference type="EMBL" id="DQ305552">
    <property type="protein sequence ID" value="ABC26088.1"/>
    <property type="molecule type" value="Genomic_DNA"/>
</dbReference>
<dbReference type="EMBL" id="DQ305553">
    <property type="protein sequence ID" value="ABC26089.1"/>
    <property type="molecule type" value="Genomic_DNA"/>
</dbReference>
<dbReference type="EMBL" id="DQ305554">
    <property type="protein sequence ID" value="ABC26090.1"/>
    <property type="molecule type" value="Genomic_DNA"/>
</dbReference>
<dbReference type="EMBL" id="DQ305555">
    <property type="protein sequence ID" value="ABC26091.1"/>
    <property type="molecule type" value="Genomic_DNA"/>
</dbReference>
<dbReference type="EMBL" id="DQ305556">
    <property type="protein sequence ID" value="ABC26092.1"/>
    <property type="molecule type" value="Genomic_DNA"/>
</dbReference>
<dbReference type="EMBL" id="DQ305557">
    <property type="protein sequence ID" value="ABC26093.1"/>
    <property type="molecule type" value="Genomic_DNA"/>
</dbReference>
<dbReference type="EMBL" id="DQ305558">
    <property type="protein sequence ID" value="ABC26094.1"/>
    <property type="molecule type" value="Genomic_DNA"/>
</dbReference>
<dbReference type="EMBL" id="DQ305559">
    <property type="protein sequence ID" value="ABC26095.1"/>
    <property type="molecule type" value="Genomic_DNA"/>
</dbReference>
<dbReference type="EMBL" id="DQ305560">
    <property type="protein sequence ID" value="ABC26096.1"/>
    <property type="molecule type" value="Genomic_DNA"/>
</dbReference>
<dbReference type="EMBL" id="DQ305561">
    <property type="protein sequence ID" value="ABC26097.1"/>
    <property type="molecule type" value="Genomic_DNA"/>
</dbReference>
<dbReference type="EMBL" id="DQ305562">
    <property type="protein sequence ID" value="ABC26098.1"/>
    <property type="molecule type" value="Genomic_DNA"/>
</dbReference>
<dbReference type="EMBL" id="DQ305563">
    <property type="protein sequence ID" value="ABC26099.1"/>
    <property type="molecule type" value="Genomic_DNA"/>
</dbReference>
<dbReference type="EMBL" id="DQ305564">
    <property type="protein sequence ID" value="ABC26100.1"/>
    <property type="molecule type" value="Genomic_DNA"/>
</dbReference>
<dbReference type="EMBL" id="DQ305565">
    <property type="protein sequence ID" value="ABC26101.1"/>
    <property type="molecule type" value="Genomic_DNA"/>
</dbReference>
<dbReference type="EMBL" id="DQ305566">
    <property type="protein sequence ID" value="ABC26102.1"/>
    <property type="molecule type" value="Genomic_DNA"/>
</dbReference>
<dbReference type="EMBL" id="DQ305567">
    <property type="protein sequence ID" value="ABC26103.1"/>
    <property type="molecule type" value="Genomic_DNA"/>
</dbReference>
<dbReference type="EMBL" id="DQ305568">
    <property type="protein sequence ID" value="ABC26104.1"/>
    <property type="molecule type" value="Genomic_DNA"/>
</dbReference>
<dbReference type="EMBL" id="DQ305569">
    <property type="protein sequence ID" value="ABC26105.1"/>
    <property type="molecule type" value="Genomic_DNA"/>
</dbReference>
<dbReference type="EMBL" id="DQ305570">
    <property type="protein sequence ID" value="ABC26106.1"/>
    <property type="molecule type" value="Genomic_DNA"/>
</dbReference>
<dbReference type="EMBL" id="DQ305571">
    <property type="protein sequence ID" value="ABC26107.1"/>
    <property type="molecule type" value="Genomic_DNA"/>
</dbReference>
<dbReference type="EMBL" id="DQ305572">
    <property type="protein sequence ID" value="ABC26108.1"/>
    <property type="molecule type" value="Genomic_DNA"/>
</dbReference>
<dbReference type="EMBL" id="DQ305573">
    <property type="protein sequence ID" value="ABC26109.1"/>
    <property type="molecule type" value="Genomic_DNA"/>
</dbReference>
<dbReference type="EMBL" id="DQ305574">
    <property type="protein sequence ID" value="ABC26110.1"/>
    <property type="molecule type" value="Genomic_DNA"/>
</dbReference>
<dbReference type="EMBL" id="DQ305575">
    <property type="protein sequence ID" value="ABC26111.1"/>
    <property type="molecule type" value="Genomic_DNA"/>
</dbReference>
<dbReference type="EMBL" id="DQ305576">
    <property type="protein sequence ID" value="ABC26112.1"/>
    <property type="molecule type" value="Genomic_DNA"/>
</dbReference>
<dbReference type="EMBL" id="DQ305577">
    <property type="protein sequence ID" value="ABC26113.1"/>
    <property type="molecule type" value="Genomic_DNA"/>
</dbReference>
<dbReference type="EMBL" id="DQ305578">
    <property type="protein sequence ID" value="ABC26114.1"/>
    <property type="molecule type" value="Genomic_DNA"/>
</dbReference>
<dbReference type="EMBL" id="DQ305579">
    <property type="protein sequence ID" value="ABC26115.1"/>
    <property type="molecule type" value="Genomic_DNA"/>
</dbReference>
<dbReference type="EMBL" id="DQ305580">
    <property type="protein sequence ID" value="ABC26116.1"/>
    <property type="molecule type" value="Genomic_DNA"/>
</dbReference>
<dbReference type="EMBL" id="DQ305581">
    <property type="protein sequence ID" value="ABC26117.1"/>
    <property type="molecule type" value="Genomic_DNA"/>
</dbReference>
<dbReference type="EMBL" id="DQ305582">
    <property type="protein sequence ID" value="ABC26118.1"/>
    <property type="molecule type" value="Genomic_DNA"/>
</dbReference>
<dbReference type="EMBL" id="DQ305583">
    <property type="protein sequence ID" value="ABC26119.1"/>
    <property type="molecule type" value="Genomic_DNA"/>
</dbReference>
<dbReference type="EMBL" id="DQ305584">
    <property type="protein sequence ID" value="ABC26120.1"/>
    <property type="molecule type" value="Genomic_DNA"/>
</dbReference>
<dbReference type="EMBL" id="DQ305585">
    <property type="protein sequence ID" value="ABC26121.1"/>
    <property type="molecule type" value="Genomic_DNA"/>
</dbReference>
<dbReference type="EMBL" id="DQ305586">
    <property type="protein sequence ID" value="ABC26122.1"/>
    <property type="molecule type" value="Genomic_DNA"/>
</dbReference>
<dbReference type="EMBL" id="DQ305587">
    <property type="protein sequence ID" value="ABC26123.1"/>
    <property type="molecule type" value="Genomic_DNA"/>
</dbReference>
<dbReference type="EMBL" id="DQ305588">
    <property type="protein sequence ID" value="ABC26124.1"/>
    <property type="molecule type" value="Genomic_DNA"/>
</dbReference>
<dbReference type="EMBL" id="DQ305589">
    <property type="protein sequence ID" value="ABC26125.1"/>
    <property type="molecule type" value="Genomic_DNA"/>
</dbReference>
<dbReference type="EMBL" id="DQ305590">
    <property type="protein sequence ID" value="ABC26126.1"/>
    <property type="molecule type" value="Genomic_DNA"/>
</dbReference>
<dbReference type="EMBL" id="DQ305591">
    <property type="protein sequence ID" value="ABC26127.1"/>
    <property type="molecule type" value="Genomic_DNA"/>
</dbReference>
<dbReference type="EMBL" id="DQ305592">
    <property type="protein sequence ID" value="ABC26128.1"/>
    <property type="molecule type" value="Genomic_DNA"/>
</dbReference>
<dbReference type="EMBL" id="DQ305593">
    <property type="protein sequence ID" value="ABC26129.1"/>
    <property type="molecule type" value="Genomic_DNA"/>
</dbReference>
<dbReference type="EMBL" id="DQ305594">
    <property type="protein sequence ID" value="ABC26130.1"/>
    <property type="molecule type" value="Genomic_DNA"/>
</dbReference>
<dbReference type="EMBL" id="DQ305595">
    <property type="protein sequence ID" value="ABC26131.1"/>
    <property type="molecule type" value="Genomic_DNA"/>
</dbReference>
<dbReference type="EMBL" id="DQ305596">
    <property type="protein sequence ID" value="ABC26132.1"/>
    <property type="molecule type" value="Genomic_DNA"/>
</dbReference>
<dbReference type="EMBL" id="DQ305597">
    <property type="protein sequence ID" value="ABC26133.1"/>
    <property type="molecule type" value="Genomic_DNA"/>
</dbReference>
<dbReference type="EMBL" id="DQ305598">
    <property type="protein sequence ID" value="ABC26134.1"/>
    <property type="molecule type" value="Genomic_DNA"/>
</dbReference>
<dbReference type="EMBL" id="DQ305599">
    <property type="protein sequence ID" value="ABC26135.1"/>
    <property type="molecule type" value="Genomic_DNA"/>
</dbReference>
<dbReference type="EMBL" id="DQ305600">
    <property type="protein sequence ID" value="ABC26136.1"/>
    <property type="molecule type" value="Genomic_DNA"/>
</dbReference>
<dbReference type="EMBL" id="DQ305601">
    <property type="protein sequence ID" value="ABC26137.1"/>
    <property type="molecule type" value="Genomic_DNA"/>
</dbReference>
<dbReference type="EMBL" id="DQ305602">
    <property type="protein sequence ID" value="ABC26138.1"/>
    <property type="molecule type" value="Genomic_DNA"/>
</dbReference>
<dbReference type="EMBL" id="DQ305603">
    <property type="protein sequence ID" value="ABC26139.1"/>
    <property type="molecule type" value="Genomic_DNA"/>
</dbReference>
<dbReference type="EMBL" id="DQ305604">
    <property type="protein sequence ID" value="ABC26140.1"/>
    <property type="molecule type" value="Genomic_DNA"/>
</dbReference>
<dbReference type="EMBL" id="DQ305605">
    <property type="protein sequence ID" value="ABC26141.1"/>
    <property type="molecule type" value="Genomic_DNA"/>
</dbReference>
<dbReference type="EMBL" id="DQ305606">
    <property type="protein sequence ID" value="ABC26142.1"/>
    <property type="molecule type" value="Genomic_DNA"/>
</dbReference>
<dbReference type="EMBL" id="DQ305607">
    <property type="protein sequence ID" value="ABC26143.1"/>
    <property type="molecule type" value="Genomic_DNA"/>
</dbReference>
<dbReference type="EMBL" id="DQ305608">
    <property type="protein sequence ID" value="ABC26144.1"/>
    <property type="molecule type" value="Genomic_DNA"/>
</dbReference>
<dbReference type="EMBL" id="DQ305609">
    <property type="protein sequence ID" value="ABC26145.1"/>
    <property type="molecule type" value="Genomic_DNA"/>
</dbReference>
<dbReference type="EMBL" id="DQ305610">
    <property type="protein sequence ID" value="ABC26146.1"/>
    <property type="molecule type" value="Genomic_DNA"/>
</dbReference>
<dbReference type="EMBL" id="DQ305611">
    <property type="protein sequence ID" value="ABC26147.1"/>
    <property type="molecule type" value="Genomic_DNA"/>
</dbReference>
<dbReference type="EMBL" id="DQ305612">
    <property type="protein sequence ID" value="ABC26148.1"/>
    <property type="molecule type" value="Genomic_DNA"/>
</dbReference>
<dbReference type="EMBL" id="DQ305613">
    <property type="protein sequence ID" value="ABC26149.1"/>
    <property type="molecule type" value="Genomic_DNA"/>
</dbReference>
<dbReference type="EMBL" id="DQ305614">
    <property type="protein sequence ID" value="ABC26150.1"/>
    <property type="molecule type" value="Genomic_DNA"/>
</dbReference>
<dbReference type="EMBL" id="DQ305615">
    <property type="protein sequence ID" value="ABC26151.1"/>
    <property type="molecule type" value="Genomic_DNA"/>
</dbReference>
<dbReference type="EMBL" id="DQ305616">
    <property type="protein sequence ID" value="ABC26152.1"/>
    <property type="molecule type" value="Genomic_DNA"/>
</dbReference>
<dbReference type="EMBL" id="DQ305617">
    <property type="protein sequence ID" value="ABC26153.1"/>
    <property type="molecule type" value="Genomic_DNA"/>
</dbReference>
<dbReference type="EMBL" id="DQ305618">
    <property type="protein sequence ID" value="ABC26154.1"/>
    <property type="molecule type" value="Genomic_DNA"/>
</dbReference>
<dbReference type="EMBL" id="DQ305619">
    <property type="protein sequence ID" value="ABC26155.1"/>
    <property type="molecule type" value="Genomic_DNA"/>
</dbReference>
<dbReference type="EMBL" id="DQ305620">
    <property type="protein sequence ID" value="ABC26156.1"/>
    <property type="molecule type" value="Genomic_DNA"/>
</dbReference>
<dbReference type="EMBL" id="DQ305621">
    <property type="protein sequence ID" value="ABC26157.1"/>
    <property type="molecule type" value="Genomic_DNA"/>
</dbReference>
<dbReference type="EMBL" id="DQ305622">
    <property type="protein sequence ID" value="ABC26158.1"/>
    <property type="molecule type" value="Genomic_DNA"/>
</dbReference>
<dbReference type="EMBL" id="DQ305623">
    <property type="protein sequence ID" value="ABC26159.1"/>
    <property type="molecule type" value="Genomic_DNA"/>
</dbReference>
<dbReference type="EMBL" id="DQ305624">
    <property type="protein sequence ID" value="ABC26160.1"/>
    <property type="molecule type" value="Genomic_DNA"/>
</dbReference>
<dbReference type="EMBL" id="DQ305625">
    <property type="protein sequence ID" value="ABC26161.1"/>
    <property type="molecule type" value="Genomic_DNA"/>
</dbReference>
<dbReference type="EMBL" id="DQ305626">
    <property type="protein sequence ID" value="ABC26162.1"/>
    <property type="molecule type" value="Genomic_DNA"/>
</dbReference>
<dbReference type="EMBL" id="DQ305627">
    <property type="protein sequence ID" value="ABC26163.1"/>
    <property type="molecule type" value="Genomic_DNA"/>
</dbReference>
<dbReference type="EMBL" id="DQ305628">
    <property type="protein sequence ID" value="ABC26164.1"/>
    <property type="molecule type" value="Genomic_DNA"/>
</dbReference>
<dbReference type="EMBL" id="DQ305629">
    <property type="protein sequence ID" value="ABC26165.1"/>
    <property type="molecule type" value="Genomic_DNA"/>
</dbReference>
<dbReference type="EMBL" id="DQ305630">
    <property type="protein sequence ID" value="ABC26166.1"/>
    <property type="molecule type" value="Genomic_DNA"/>
</dbReference>
<dbReference type="EMBL" id="DQ305631">
    <property type="protein sequence ID" value="ABC26167.1"/>
    <property type="molecule type" value="Genomic_DNA"/>
</dbReference>
<dbReference type="EMBL" id="DQ305632">
    <property type="protein sequence ID" value="ABC26168.1"/>
    <property type="molecule type" value="Genomic_DNA"/>
</dbReference>
<dbReference type="EMBL" id="DQ305633">
    <property type="protein sequence ID" value="ABC26169.1"/>
    <property type="molecule type" value="Genomic_DNA"/>
</dbReference>
<dbReference type="EMBL" id="DQ305634">
    <property type="protein sequence ID" value="ABC26170.1"/>
    <property type="molecule type" value="Genomic_DNA"/>
</dbReference>
<dbReference type="EMBL" id="DQ305635">
    <property type="protein sequence ID" value="ABC26171.1"/>
    <property type="molecule type" value="Genomic_DNA"/>
</dbReference>
<dbReference type="EMBL" id="DQ305636">
    <property type="protein sequence ID" value="ABC26172.1"/>
    <property type="molecule type" value="Genomic_DNA"/>
</dbReference>
<dbReference type="EMBL" id="DQ305637">
    <property type="protein sequence ID" value="ABC26173.1"/>
    <property type="molecule type" value="Genomic_DNA"/>
</dbReference>
<dbReference type="EMBL" id="DQ305638">
    <property type="protein sequence ID" value="ABC26174.1"/>
    <property type="molecule type" value="Genomic_DNA"/>
</dbReference>
<dbReference type="EMBL" id="DQ305639">
    <property type="protein sequence ID" value="ABC26175.1"/>
    <property type="molecule type" value="Genomic_DNA"/>
</dbReference>
<dbReference type="EMBL" id="DQ305640">
    <property type="protein sequence ID" value="ABC26176.1"/>
    <property type="molecule type" value="Genomic_DNA"/>
</dbReference>
<dbReference type="EMBL" id="DQ305641">
    <property type="protein sequence ID" value="ABC26177.1"/>
    <property type="molecule type" value="Genomic_DNA"/>
</dbReference>
<dbReference type="EMBL" id="DQ305642">
    <property type="protein sequence ID" value="ABC26178.1"/>
    <property type="molecule type" value="Genomic_DNA"/>
</dbReference>
<dbReference type="EMBL" id="DQ305643">
    <property type="protein sequence ID" value="ABC26179.1"/>
    <property type="molecule type" value="Genomic_DNA"/>
</dbReference>
<dbReference type="EMBL" id="DQ305644">
    <property type="protein sequence ID" value="ABC26180.1"/>
    <property type="molecule type" value="Genomic_DNA"/>
</dbReference>
<dbReference type="EMBL" id="DQ305645">
    <property type="protein sequence ID" value="ABC26181.1"/>
    <property type="molecule type" value="Genomic_DNA"/>
</dbReference>
<dbReference type="EMBL" id="DQ305646">
    <property type="protein sequence ID" value="ABC26182.1"/>
    <property type="molecule type" value="Genomic_DNA"/>
</dbReference>
<dbReference type="EMBL" id="DQ305647">
    <property type="protein sequence ID" value="ABC26183.1"/>
    <property type="molecule type" value="Genomic_DNA"/>
</dbReference>
<dbReference type="EMBL" id="DQ305648">
    <property type="protein sequence ID" value="ABC26184.1"/>
    <property type="molecule type" value="Genomic_DNA"/>
</dbReference>
<dbReference type="EMBL" id="DQ305649">
    <property type="protein sequence ID" value="ABC26185.1"/>
    <property type="molecule type" value="Genomic_DNA"/>
</dbReference>
<dbReference type="EMBL" id="DQ305650">
    <property type="protein sequence ID" value="ABC26186.1"/>
    <property type="molecule type" value="Genomic_DNA"/>
</dbReference>
<dbReference type="EMBL" id="DQ305651">
    <property type="protein sequence ID" value="ABC26187.1"/>
    <property type="molecule type" value="Genomic_DNA"/>
</dbReference>
<dbReference type="EMBL" id="DQ305652">
    <property type="protein sequence ID" value="ABC26188.1"/>
    <property type="molecule type" value="Genomic_DNA"/>
</dbReference>
<dbReference type="EMBL" id="DQ305653">
    <property type="protein sequence ID" value="ABC26189.1"/>
    <property type="molecule type" value="Genomic_DNA"/>
</dbReference>
<dbReference type="EMBL" id="DQ305654">
    <property type="protein sequence ID" value="ABC26190.1"/>
    <property type="molecule type" value="Genomic_DNA"/>
</dbReference>
<dbReference type="EMBL" id="DQ305655">
    <property type="protein sequence ID" value="ABC26191.1"/>
    <property type="molecule type" value="Genomic_DNA"/>
</dbReference>
<dbReference type="EMBL" id="U53473">
    <property type="protein sequence ID" value="AAA98976.1"/>
    <property type="molecule type" value="Genomic_DNA"/>
</dbReference>
<dbReference type="EMBL" id="AF042740">
    <property type="protein sequence ID" value="AAC03773.1"/>
    <property type="molecule type" value="Genomic_DNA"/>
</dbReference>
<dbReference type="EMBL" id="AF055874">
    <property type="protein sequence ID" value="AAC14117.1"/>
    <property type="molecule type" value="Genomic_DNA"/>
</dbReference>
<dbReference type="EMBL" id="AF055875">
    <property type="protein sequence ID" value="AAC14118.1"/>
    <property type="molecule type" value="Genomic_DNA"/>
</dbReference>
<dbReference type="EMBL" id="AF320309">
    <property type="protein sequence ID" value="AAG34181.1"/>
    <property type="molecule type" value="Genomic_DNA"/>
</dbReference>
<dbReference type="EMBL" id="AF348074">
    <property type="protein sequence ID" value="AAK51710.1"/>
    <property type="molecule type" value="Genomic_DNA"/>
</dbReference>
<dbReference type="EMBL" id="AF348075">
    <property type="protein sequence ID" value="AAK51711.1"/>
    <property type="status" value="ALT_FRAME"/>
    <property type="molecule type" value="Genomic_DNA"/>
</dbReference>
<dbReference type="EMBL" id="AY230251">
    <property type="protein sequence ID" value="AAO73561.1"/>
    <property type="molecule type" value="Genomic_DNA"/>
</dbReference>
<dbReference type="EMBL" id="AY230252">
    <property type="protein sequence ID" value="AAO73562.1"/>
    <property type="molecule type" value="Genomic_DNA"/>
</dbReference>
<dbReference type="EMBL" id="CR407631">
    <property type="protein sequence ID" value="CAG28559.1"/>
    <property type="molecule type" value="mRNA"/>
</dbReference>
<dbReference type="EMBL" id="AY331807">
    <property type="protein sequence ID" value="AAP81164.1"/>
    <property type="molecule type" value="Genomic_DNA"/>
</dbReference>
<dbReference type="EMBL" id="AC025062">
    <property type="status" value="NOT_ANNOTATED_CDS"/>
    <property type="molecule type" value="Genomic_DNA"/>
</dbReference>
<dbReference type="EMBL" id="AC120051">
    <property type="status" value="NOT_ANNOTATED_CDS"/>
    <property type="molecule type" value="Genomic_DNA"/>
</dbReference>
<dbReference type="EMBL" id="BC015878">
    <property type="protein sequence ID" value="AAH15878.1"/>
    <property type="molecule type" value="mRNA"/>
</dbReference>
<dbReference type="EMBL" id="BC067218">
    <property type="protein sequence ID" value="AAH67218.1"/>
    <property type="molecule type" value="mRNA"/>
</dbReference>
<dbReference type="EMBL" id="M75163">
    <property type="protein sequence ID" value="AAA59906.1"/>
    <property type="molecule type" value="Genomic_DNA"/>
</dbReference>
<dbReference type="CCDS" id="CCDS6008.1"/>
<dbReference type="PIR" id="B34585">
    <property type="entry name" value="B34585"/>
</dbReference>
<dbReference type="PIR" id="S02788">
    <property type="entry name" value="S02788"/>
</dbReference>
<dbReference type="RefSeq" id="NP_000006.2">
    <property type="nucleotide sequence ID" value="NM_000015.3"/>
</dbReference>
<dbReference type="RefSeq" id="XP_016868427.1">
    <property type="nucleotide sequence ID" value="XM_017012938.2"/>
</dbReference>
<dbReference type="PDB" id="2PFR">
    <property type="method" value="X-ray"/>
    <property type="resolution" value="1.92 A"/>
    <property type="chains" value="A/B=2-290"/>
</dbReference>
<dbReference type="PDBsum" id="2PFR"/>
<dbReference type="SMR" id="P11245"/>
<dbReference type="BioGRID" id="106528">
    <property type="interactions" value="23"/>
</dbReference>
<dbReference type="FunCoup" id="P11245">
    <property type="interactions" value="115"/>
</dbReference>
<dbReference type="IntAct" id="P11245">
    <property type="interactions" value="22"/>
</dbReference>
<dbReference type="MINT" id="P11245"/>
<dbReference type="STRING" id="9606.ENSP00000286479"/>
<dbReference type="ChEMBL" id="CHEMBL2194"/>
<dbReference type="DrugBank" id="DB00316">
    <property type="generic name" value="Acetaminophen"/>
</dbReference>
<dbReference type="DrugBank" id="DB00945">
    <property type="generic name" value="Acetylsalicylic acid"/>
</dbReference>
<dbReference type="DrugBank" id="DB11640">
    <property type="generic name" value="Amifampridine"/>
</dbReference>
<dbReference type="DrugBank" id="DB01068">
    <property type="generic name" value="Clonazepam"/>
</dbReference>
<dbReference type="DrugBank" id="DB00250">
    <property type="generic name" value="Dapsone"/>
</dbReference>
<dbReference type="DrugBank" id="DB04953">
    <property type="generic name" value="Ezogabine"/>
</dbReference>
<dbReference type="DrugBank" id="DB00951">
    <property type="generic name" value="Isoniazid"/>
</dbReference>
<dbReference type="DrugBank" id="DB12612">
    <property type="generic name" value="Ozanimod"/>
</dbReference>
<dbReference type="DrugBank" id="DB09288">
    <property type="generic name" value="Propacetamol"/>
</dbReference>
<dbReference type="DrugBank" id="DB01015">
    <property type="generic name" value="Sulfamethoxazole"/>
</dbReference>
<dbReference type="iPTMnet" id="P11245"/>
<dbReference type="PhosphoSitePlus" id="P11245"/>
<dbReference type="BioMuta" id="NAT2"/>
<dbReference type="DMDM" id="114238"/>
<dbReference type="MassIVE" id="P11245"/>
<dbReference type="PaxDb" id="9606-ENSP00000286479"/>
<dbReference type="PeptideAtlas" id="P11245"/>
<dbReference type="ProteomicsDB" id="52728"/>
<dbReference type="Antibodypedia" id="22356">
    <property type="antibodies" value="252 antibodies from 29 providers"/>
</dbReference>
<dbReference type="DNASU" id="10"/>
<dbReference type="Ensembl" id="ENST00000286479.4">
    <property type="protein sequence ID" value="ENSP00000286479.3"/>
    <property type="gene ID" value="ENSG00000156006.5"/>
</dbReference>
<dbReference type="GeneID" id="10"/>
<dbReference type="KEGG" id="hsa:10"/>
<dbReference type="MANE-Select" id="ENST00000286479.4">
    <property type="protein sequence ID" value="ENSP00000286479.3"/>
    <property type="RefSeq nucleotide sequence ID" value="NM_000015.3"/>
    <property type="RefSeq protein sequence ID" value="NP_000006.2"/>
</dbReference>
<dbReference type="UCSC" id="uc003wyw.2">
    <property type="organism name" value="human"/>
</dbReference>
<dbReference type="AGR" id="HGNC:7646"/>
<dbReference type="CTD" id="10"/>
<dbReference type="DisGeNET" id="10"/>
<dbReference type="GeneCards" id="NAT2"/>
<dbReference type="HGNC" id="HGNC:7646">
    <property type="gene designation" value="NAT2"/>
</dbReference>
<dbReference type="HPA" id="ENSG00000156006">
    <property type="expression patterns" value="Group enriched (intestine, liver)"/>
</dbReference>
<dbReference type="MalaCards" id="NAT2"/>
<dbReference type="MIM" id="243400">
    <property type="type" value="phenotype"/>
</dbReference>
<dbReference type="MIM" id="612182">
    <property type="type" value="gene"/>
</dbReference>
<dbReference type="neXtProt" id="NX_P11245"/>
<dbReference type="OpenTargets" id="ENSG00000156006"/>
<dbReference type="PharmGKB" id="PA18"/>
<dbReference type="VEuPathDB" id="HostDB:ENSG00000156006"/>
<dbReference type="eggNOG" id="ENOG502RD0D">
    <property type="taxonomic scope" value="Eukaryota"/>
</dbReference>
<dbReference type="GeneTree" id="ENSGT00390000012054"/>
<dbReference type="HOGENOM" id="CLU_049918_3_0_1"/>
<dbReference type="InParanoid" id="P11245"/>
<dbReference type="OMA" id="HCGQAME"/>
<dbReference type="OrthoDB" id="9479791at2759"/>
<dbReference type="PAN-GO" id="P11245">
    <property type="GO annotations" value="1 GO annotation based on evolutionary models"/>
</dbReference>
<dbReference type="PhylomeDB" id="P11245"/>
<dbReference type="TreeFam" id="TF106311"/>
<dbReference type="BRENDA" id="2.3.1.5">
    <property type="organism ID" value="2681"/>
</dbReference>
<dbReference type="PathwayCommons" id="P11245"/>
<dbReference type="Reactome" id="R-HSA-156582">
    <property type="pathway name" value="Acetylation"/>
</dbReference>
<dbReference type="Reactome" id="R-HSA-9753281">
    <property type="pathway name" value="Paracetamol ADME"/>
</dbReference>
<dbReference type="SignaLink" id="P11245"/>
<dbReference type="BioGRID-ORCS" id="10">
    <property type="hits" value="12 hits in 1145 CRISPR screens"/>
</dbReference>
<dbReference type="ChiTaRS" id="NAT2">
    <property type="organism name" value="human"/>
</dbReference>
<dbReference type="EvolutionaryTrace" id="P11245"/>
<dbReference type="GeneWiki" id="N-acetyltransferase_2"/>
<dbReference type="GenomeRNAi" id="10"/>
<dbReference type="Pharos" id="P11245">
    <property type="development level" value="Tbio"/>
</dbReference>
<dbReference type="PRO" id="PR:P11245"/>
<dbReference type="Proteomes" id="UP000005640">
    <property type="component" value="Chromosome 8"/>
</dbReference>
<dbReference type="RNAct" id="P11245">
    <property type="molecule type" value="protein"/>
</dbReference>
<dbReference type="Bgee" id="ENSG00000156006">
    <property type="expression patterns" value="Expressed in right lobe of liver and 89 other cell types or tissues"/>
</dbReference>
<dbReference type="ExpressionAtlas" id="P11245">
    <property type="expression patterns" value="baseline and differential"/>
</dbReference>
<dbReference type="GO" id="GO:0005829">
    <property type="term" value="C:cytosol"/>
    <property type="evidence" value="ECO:0000304"/>
    <property type="project" value="Reactome"/>
</dbReference>
<dbReference type="GO" id="GO:0004060">
    <property type="term" value="F:arylamine N-acetyltransferase activity"/>
    <property type="evidence" value="ECO:0000318"/>
    <property type="project" value="GO_Central"/>
</dbReference>
<dbReference type="GO" id="GO:0046990">
    <property type="term" value="F:N-hydroxyarylamine O-acetyltransferase activity"/>
    <property type="evidence" value="ECO:0000314"/>
    <property type="project" value="UniProtKB"/>
</dbReference>
<dbReference type="GO" id="GO:0006805">
    <property type="term" value="P:xenobiotic metabolic process"/>
    <property type="evidence" value="ECO:0000304"/>
    <property type="project" value="Reactome"/>
</dbReference>
<dbReference type="FunFam" id="3.30.2140.20:FF:000001">
    <property type="entry name" value="Arylamine N-acetyltransferase 1"/>
    <property type="match status" value="1"/>
</dbReference>
<dbReference type="Gene3D" id="3.30.2140.20">
    <property type="match status" value="1"/>
</dbReference>
<dbReference type="InterPro" id="IPR001447">
    <property type="entry name" value="Arylamine_N-AcTrfase"/>
</dbReference>
<dbReference type="InterPro" id="IPR053710">
    <property type="entry name" value="Arylamine_NAT_domain_sf"/>
</dbReference>
<dbReference type="InterPro" id="IPR038765">
    <property type="entry name" value="Papain-like_cys_pep_sf"/>
</dbReference>
<dbReference type="PANTHER" id="PTHR11786:SF6">
    <property type="entry name" value="ARYLAMINE N-ACETYLTRANSFERASE 2"/>
    <property type="match status" value="1"/>
</dbReference>
<dbReference type="PANTHER" id="PTHR11786">
    <property type="entry name" value="N-HYDROXYARYLAMINE O-ACETYLTRANSFERASE"/>
    <property type="match status" value="1"/>
</dbReference>
<dbReference type="Pfam" id="PF00797">
    <property type="entry name" value="Acetyltransf_2"/>
    <property type="match status" value="1"/>
</dbReference>
<dbReference type="PRINTS" id="PR01543">
    <property type="entry name" value="ANATRNSFRASE"/>
</dbReference>
<dbReference type="SUPFAM" id="SSF54001">
    <property type="entry name" value="Cysteine proteinases"/>
    <property type="match status" value="1"/>
</dbReference>
<sequence>MDIEAYFERIGYKNSRNKLDLETLTDILEHQIRAVPFENLNMHCGQAMELGLEAIFDHIVRRNRGGWCLQVNQLLYWALTTIGFQTTMLGGYFYIPPVNKYSTGMVHLLLQVTIDGRNYIVDAGSGSSSQMWQPLELISGKDQPQVPCIFCLTEERGIWYLDQIRREQYITNKEFLNSHLLPKKKHQKIYLFTLEPRTIEDFESMNTYLQTSPTSSFITTSFCSLQTPEGVYCLVGFILTYRKFNYKDNTDLVEFKTLTEEEVEEVLRNIFKISLGRNLVPKPGDGSLTI</sequence>
<name>ARY2_HUMAN</name>
<proteinExistence type="evidence at protein level"/>
<accession>P11245</accession>
<accession>O43637</accession>
<accession>O60654</accession>
<accession>O60655</accession>
<accession>Q13146</accession>
<accession>Q16697</accession>
<accession>Q2MLE4</accession>
<accession>Q2MLF5</accession>
<accession>Q2MLG8</accession>
<accession>Q2MLJ6</accession>
<accession>Q2MLK4</accession>
<accession>Q2MLK6</accession>
<accession>Q2MLN7</accession>
<accession>Q6LET4</accession>
<accession>Q86XS0</accession>
<accession>Q86XS1</accession>
<accession>Q96KY8</accession>
<accession>Q96T64</accession>
<accession>Q96T65</accession>
<accession>Q9H220</accession>
<evidence type="ECO:0000269" key="1">
    <source>
    </source>
</evidence>
<evidence type="ECO:0000269" key="2">
    <source>
    </source>
</evidence>
<evidence type="ECO:0000269" key="3">
    <source>
    </source>
</evidence>
<evidence type="ECO:0000269" key="4">
    <source>
    </source>
</evidence>
<evidence type="ECO:0000269" key="5">
    <source>
    </source>
</evidence>
<evidence type="ECO:0000269" key="6">
    <source>
    </source>
</evidence>
<evidence type="ECO:0000269" key="7">
    <source>
    </source>
</evidence>
<evidence type="ECO:0000269" key="8">
    <source>
    </source>
</evidence>
<evidence type="ECO:0000269" key="9">
    <source>
    </source>
</evidence>
<evidence type="ECO:0000269" key="10">
    <source>
    </source>
</evidence>
<evidence type="ECO:0000269" key="11">
    <source>
    </source>
</evidence>
<evidence type="ECO:0000269" key="12">
    <source>
    </source>
</evidence>
<evidence type="ECO:0000269" key="13">
    <source>
    </source>
</evidence>
<evidence type="ECO:0000269" key="14">
    <source>
    </source>
</evidence>
<evidence type="ECO:0000269" key="15">
    <source ref="10"/>
</evidence>
<evidence type="ECO:0000269" key="16">
    <source ref="11"/>
</evidence>
<evidence type="ECO:0000269" key="17">
    <source ref="12"/>
</evidence>
<evidence type="ECO:0000269" key="18">
    <source ref="14"/>
</evidence>
<evidence type="ECO:0000269" key="19">
    <source ref="7"/>
</evidence>
<evidence type="ECO:0000269" key="20">
    <source ref="8"/>
</evidence>
<evidence type="ECO:0000269" key="21">
    <source ref="9"/>
</evidence>
<evidence type="ECO:0000305" key="22"/>
<evidence type="ECO:0000305" key="23">
    <source>
    </source>
</evidence>
<evidence type="ECO:0007829" key="24">
    <source>
        <dbReference type="PDB" id="2PFR"/>
    </source>
</evidence>
<reference key="1">
    <citation type="journal article" date="1989" name="Nucleic Acids Res.">
        <title>Nucleotide sequence of an intronless gene for a human arylamine N-acetyltransferase related to polymorphic drug acetylation.</title>
        <authorList>
            <person name="Grant D.M."/>
            <person name="Blum M."/>
            <person name="Demierre A."/>
            <person name="Meyer U.A."/>
        </authorList>
    </citation>
    <scope>NUCLEOTIDE SEQUENCE [GENOMIC DNA] (ALLELE NAT2*4)</scope>
    <scope>VARIANT LYS-268</scope>
</reference>
<reference key="2">
    <citation type="journal article" date="1990" name="DNA Cell Biol.">
        <title>Human arylamine N-acetyltransferase genes: isolation, chromosomal localization, and functional expression.</title>
        <authorList>
            <person name="Blum M."/>
            <person name="Grant D.M."/>
            <person name="McBride W."/>
            <person name="Heim M."/>
            <person name="Meyer U.A."/>
        </authorList>
    </citation>
    <scope>NUCLEOTIDE SEQUENCE [GENOMIC DNA]</scope>
    <scope>VARIANT LYS-268</scope>
</reference>
<reference key="3">
    <citation type="journal article" date="1990" name="J. Biol. Chem.">
        <title>Cloning and expression of cDNAs for polymorphic and monomorphic arylamine N-acetyltransferases from human liver.</title>
        <authorList>
            <person name="Ohsako S."/>
            <person name="Deguchi T."/>
        </authorList>
    </citation>
    <scope>NUCLEOTIDE SEQUENCE [MRNA]</scope>
    <scope>VARIANTS LYS-268 AND GLU-286</scope>
    <source>
        <tissue>Liver</tissue>
    </source>
</reference>
<reference key="4">
    <citation type="journal article" date="1992" name="J. Biol. Chem.">
        <title>Sequences and expression of alleles of polymorphic arylamine N-acetyltransferase of human liver.</title>
        <authorList>
            <person name="Deguchi T."/>
        </authorList>
    </citation>
    <scope>NUCLEOTIDE SEQUENCE [GENOMIC DNA] (ALLELES NAT2*4; NAT2*6A AND NAT2*7B)</scope>
    <scope>VARIANTS GLN-197; LYS-268 AND GLU-286</scope>
    <source>
        <tissue>Liver</tissue>
    </source>
</reference>
<reference key="5">
    <citation type="journal article" date="1994" name="Drug Metab. Dispos.">
        <title>Cloning, expression, and functional characterization of two mutant (NAT2(191) and NAT2(341/803)) and wild-type human polymorphic N-acetyltransferase (NAT2) alleles.</title>
        <authorList>
            <person name="Ferguson R.J."/>
            <person name="Doll M.A."/>
            <person name="Rustan T.D."/>
            <person name="Gray K."/>
            <person name="Hein D.W."/>
        </authorList>
    </citation>
    <scope>NUCLEOTIDE SEQUENCE [GENOMIC DNA] (ALLELES NAT2*5C AND NAT2*14A)</scope>
    <scope>VARIANTS GLN-64; THR-114 AND LYS-268</scope>
    <scope>FUNCTION</scope>
    <scope>CATALYTIC ACTIVITY</scope>
    <scope>BIOPHYSICOCHEMICAL PROPERTIES</scope>
    <scope>CHARACTERIZATION OF VARIANTS GLN-64; THR-114 AND LYS-268</scope>
</reference>
<reference key="6">
    <citation type="journal article" date="2006" name="Am. J. Hum. Genet.">
        <title>Deciphering the ancient and complex evolutionary history of human arylamine N-acetyltransferase genes.</title>
        <authorList>
            <person name="Patin E."/>
            <person name="Barreiro L.B."/>
            <person name="Sabeti P.C."/>
            <person name="Austerlitz F."/>
            <person name="Luca F."/>
            <person name="Sajantila A."/>
            <person name="Behar D.M."/>
            <person name="Semino O."/>
            <person name="Sakuntabhai A."/>
            <person name="Guiso N."/>
            <person name="Gicquel B."/>
            <person name="McElreavey K."/>
            <person name="Harding R.M."/>
            <person name="Heyer E."/>
            <person name="Quintana-Murci L."/>
        </authorList>
    </citation>
    <scope>NUCLEOTIDE SEQUENCE [GENOMIC DNA]</scope>
    <scope>VARIANTS ILE-24; GLN-64; THR-114; MET-193; GLN-197; HIS-208; LYS-268 AND GLU-286</scope>
</reference>
<reference key="7">
    <citation type="submission" date="1996-05" db="EMBL/GenBank/DDBJ databases">
        <authorList>
            <person name="Doll M.A."/>
            <person name="Satran S.L."/>
            <person name="Hein D.W."/>
        </authorList>
    </citation>
    <scope>NUCLEOTIDE SEQUENCE [GENOMIC DNA] (ALLELE NAT2*12A)</scope>
</reference>
<reference key="8">
    <citation type="submission" date="1998-03" db="EMBL/GenBank/DDBJ databases">
        <authorList>
            <person name="Leff M.A."/>
            <person name="Doll M.A."/>
            <person name="Feng Y."/>
            <person name="Fretland A.J."/>
            <person name="Hein D.W."/>
        </authorList>
    </citation>
    <scope>NUCLEOTIDE SEQUENCE [GENOMIC DNA] (ALLELES NAT2*5D; NAT2*6D; NAT2*14G)</scope>
    <scope>VARIANTS GLN-64; THR-114; GLN-197 AND LYS-268</scope>
</reference>
<reference key="9">
    <citation type="submission" date="2000-11" db="EMBL/GenBank/DDBJ databases">
        <title>A novel linkage of two NAT2 mutations.</title>
        <authorList>
            <person name="Banerjee M."/>
            <person name="Anitha A."/>
        </authorList>
    </citation>
    <scope>NUCLEOTIDE SEQUENCE [GENOMIC DNA]</scope>
    <scope>VARIANTS THR-114 AND LYS-268</scope>
</reference>
<reference key="10">
    <citation type="submission" date="2001-02" db="EMBL/GenBank/DDBJ databases">
        <title>A novel allele showing linkage with 282, 341, 481, 803 point mutations in the NAT2 gene.</title>
        <authorList>
            <person name="Pillai A.A."/>
            <person name="Banerjee M."/>
        </authorList>
    </citation>
    <scope>NUCLEOTIDE SEQUENCE [GENOMIC DNA]</scope>
    <scope>VARIANT THR-114</scope>
</reference>
<reference key="11">
    <citation type="submission" date="2001-02" db="EMBL/GenBank/DDBJ databases">
        <title>A novel NAT2 allele with point mutations 341, 481, 803, 859 in the ethnic populations of Kerala.</title>
        <authorList>
            <person name="Pillai A.A."/>
            <person name="Banerjee M."/>
        </authorList>
    </citation>
    <scope>NUCLEOTIDE SEQUENCE [GENOMIC DNA]</scope>
    <scope>VARIANT THR-114</scope>
</reference>
<reference key="12">
    <citation type="submission" date="2003-02" db="EMBL/GenBank/DDBJ databases">
        <authorList>
            <person name="Doll M.A."/>
            <person name="Zang Y."/>
            <person name="Yeager M."/>
            <person name="Welch R."/>
            <person name="Chanock S."/>
            <person name="Hein D.W."/>
        </authorList>
    </citation>
    <scope>NUCLEOTIDE SEQUENCE [GENOMIC DNA] (ALLELES NAT2*5I AND NAT2*12D)</scope>
    <scope>VARIANTS THR-114; ASN-122 AND PHE-137</scope>
</reference>
<reference key="13">
    <citation type="submission" date="2004-05" db="EMBL/GenBank/DDBJ databases">
        <title>Cloning of human full open reading frames in Gateway(TM) system entry vector (pDONR201).</title>
        <authorList>
            <person name="Ebert L."/>
            <person name="Schick M."/>
            <person name="Neubert P."/>
            <person name="Schatten R."/>
            <person name="Henze S."/>
            <person name="Korn B."/>
        </authorList>
    </citation>
    <scope>NUCLEOTIDE SEQUENCE [LARGE SCALE MRNA]</scope>
    <scope>VARIANT LYS-268</scope>
</reference>
<reference key="14">
    <citation type="submission" date="2003-06" db="EMBL/GenBank/DDBJ databases">
        <authorList>
            <consortium name="NIEHS SNPs program"/>
        </authorList>
    </citation>
    <scope>NUCLEOTIDE SEQUENCE [GENOMIC DNA]</scope>
    <scope>VARIANTS ILE-24; GLN-64; THR-114; GLN-197; LEU-228; LYS-268 AND GLU-286</scope>
</reference>
<reference key="15">
    <citation type="journal article" date="2006" name="Nature">
        <title>DNA sequence and analysis of human chromosome 8.</title>
        <authorList>
            <person name="Nusbaum C."/>
            <person name="Mikkelsen T.S."/>
            <person name="Zody M.C."/>
            <person name="Asakawa S."/>
            <person name="Taudien S."/>
            <person name="Garber M."/>
            <person name="Kodira C.D."/>
            <person name="Schueler M.G."/>
            <person name="Shimizu A."/>
            <person name="Whittaker C.A."/>
            <person name="Chang J.L."/>
            <person name="Cuomo C.A."/>
            <person name="Dewar K."/>
            <person name="FitzGerald M.G."/>
            <person name="Yang X."/>
            <person name="Allen N.R."/>
            <person name="Anderson S."/>
            <person name="Asakawa T."/>
            <person name="Blechschmidt K."/>
            <person name="Bloom T."/>
            <person name="Borowsky M.L."/>
            <person name="Butler J."/>
            <person name="Cook A."/>
            <person name="Corum B."/>
            <person name="DeArellano K."/>
            <person name="DeCaprio D."/>
            <person name="Dooley K.T."/>
            <person name="Dorris L. III"/>
            <person name="Engels R."/>
            <person name="Gloeckner G."/>
            <person name="Hafez N."/>
            <person name="Hagopian D.S."/>
            <person name="Hall J.L."/>
            <person name="Ishikawa S.K."/>
            <person name="Jaffe D.B."/>
            <person name="Kamat A."/>
            <person name="Kudoh J."/>
            <person name="Lehmann R."/>
            <person name="Lokitsang T."/>
            <person name="Macdonald P."/>
            <person name="Major J.E."/>
            <person name="Matthews C.D."/>
            <person name="Mauceli E."/>
            <person name="Menzel U."/>
            <person name="Mihalev A.H."/>
            <person name="Minoshima S."/>
            <person name="Murayama Y."/>
            <person name="Naylor J.W."/>
            <person name="Nicol R."/>
            <person name="Nguyen C."/>
            <person name="O'Leary S.B."/>
            <person name="O'Neill K."/>
            <person name="Parker S.C.J."/>
            <person name="Polley A."/>
            <person name="Raymond C.K."/>
            <person name="Reichwald K."/>
            <person name="Rodriguez J."/>
            <person name="Sasaki T."/>
            <person name="Schilhabel M."/>
            <person name="Siddiqui R."/>
            <person name="Smith C.L."/>
            <person name="Sneddon T.P."/>
            <person name="Talamas J.A."/>
            <person name="Tenzin P."/>
            <person name="Topham K."/>
            <person name="Venkataraman V."/>
            <person name="Wen G."/>
            <person name="Yamazaki S."/>
            <person name="Young S.K."/>
            <person name="Zeng Q."/>
            <person name="Zimmer A.R."/>
            <person name="Rosenthal A."/>
            <person name="Birren B.W."/>
            <person name="Platzer M."/>
            <person name="Shimizu N."/>
            <person name="Lander E.S."/>
        </authorList>
    </citation>
    <scope>NUCLEOTIDE SEQUENCE [LARGE SCALE GENOMIC DNA]</scope>
</reference>
<reference key="16">
    <citation type="journal article" date="2004" name="Genome Res.">
        <title>The status, quality, and expansion of the NIH full-length cDNA project: the Mammalian Gene Collection (MGC).</title>
        <authorList>
            <consortium name="The MGC Project Team"/>
        </authorList>
    </citation>
    <scope>NUCLEOTIDE SEQUENCE [LARGE SCALE MRNA]</scope>
    <scope>VARIANTS GLN-197 AND LYS-268</scope>
    <source>
        <tissue>Liver</tissue>
    </source>
</reference>
<reference key="17">
    <citation type="journal article" date="1991" name="Biochem. Biophys. Res. Commun.">
        <title>Structure and restriction fragment length polymorphism of genes for human liver arylamine N-acetyltransferases.</title>
        <authorList>
            <person name="Ebisawa T."/>
            <person name="Deguchi T."/>
        </authorList>
    </citation>
    <scope>NUCLEOTIDE SEQUENCE [GENOMIC DNA] OF 1-22</scope>
</reference>
<reference key="18">
    <citation type="journal article" date="1989" name="FEBS Lett.">
        <title>Evidence for two closely related isozymes of arylamine N-acetyltransferase in human liver.</title>
        <authorList>
            <person name="Grant D.M."/>
            <person name="Lottspeich F."/>
            <person name="Meyer U.A."/>
        </authorList>
    </citation>
    <scope>PROTEIN SEQUENCE OF 18-33 AND 189-197</scope>
</reference>
<reference key="19">
    <citation type="journal article" date="2007" name="J. Biol. Chem.">
        <title>Structural basis of substrate-binding specificity of human arylamine N-acetyltransferases.</title>
        <authorList>
            <person name="Wu H."/>
            <person name="Dombrovsky L."/>
            <person name="Tempel W."/>
            <person name="Martin F."/>
            <person name="Loppnau P."/>
            <person name="Goodfellow G.H."/>
            <person name="Grant D.M."/>
            <person name="Plotnikov A.N."/>
        </authorList>
    </citation>
    <scope>X-RAY CRYSTALLOGRAPHY (1.92 ANGSTROMS) IN COMPLEX WITH COENZYME A</scope>
</reference>
<reference key="20">
    <citation type="journal article" date="1991" name="Proc. Natl. Acad. Sci. U.S.A.">
        <title>Diverse point mutations in the human gene for polymorphic N-acetyltransferase.</title>
        <authorList>
            <person name="Vatsis K.P."/>
            <person name="Martell K.J."/>
            <person name="Weber W.W."/>
        </authorList>
    </citation>
    <scope>VARIANTS</scope>
</reference>
<reference key="21">
    <citation type="journal article" date="1993" name="Biochem. Biophys. Res. Commun.">
        <title>The structure and characteristics of a fourth allele of polymorphic N-acetyltransferase gene found in the Japanese population.</title>
        <authorList>
            <person name="Abe M."/>
            <person name="Deguchi T."/>
            <person name="Suzuki T."/>
        </authorList>
    </citation>
    <scope>VARIANTS</scope>
</reference>
<reference key="22">
    <citation type="journal article" date="1994" name="Pharmacogenetics">
        <title>Ethnic distribution of slow acetylator mutations in the polymorphic N-acetyltransferase (NAT2) gene.</title>
        <authorList>
            <person name="Lin H.J."/>
            <person name="Han C.Y."/>
            <person name="Lin B.K."/>
            <person name="Hardy S."/>
        </authorList>
    </citation>
    <scope>VARIANTS PRO-145 AND THR-282</scope>
</reference>
<reference key="23">
    <citation type="journal article" date="2000" name="Hum. Mutat.">
        <title>Novel allele containing a 190C&gt;T nonsynonymous substitution in the N-acetyltransferase (NAT2) gene.</title>
        <authorList>
            <person name="Shishikura K."/>
            <person name="Hohjoh H."/>
            <person name="Tokunaga K."/>
        </authorList>
    </citation>
    <scope>VARIANT TRP-64</scope>
</reference>
<reference key="24">
    <citation type="journal article" date="2001" name="Pharmacogenetics">
        <title>Functional characterization of human N-acetyltransferase 2 (NAT2) single nucleotide polymorphisms.</title>
        <authorList>
            <person name="Fretland A.J."/>
            <person name="Leff M.A."/>
            <person name="Doll M.A."/>
            <person name="Hein D.W."/>
        </authorList>
    </citation>
    <scope>CHARACTERIZATION OF VARIANTS GLN-64; THR-114; PRO-145; GLN-197; LYS-268; THR-282 AND GLU-286</scope>
</reference>
<reference key="25">
    <citation type="journal article" date="2002" name="Biol. Chem.">
        <title>Functional genomics of C190T single nucleotide polymorphism in human N-acetyltransferase 2.</title>
        <authorList>
            <person name="Zhu Y."/>
            <person name="Doll M.A."/>
            <person name="Hein D.W."/>
        </authorList>
    </citation>
    <scope>CHARACTERIZATION OF VARIANTS TRP-64 AND LYS-268</scope>
    <scope>FUNCTION</scope>
    <scope>CATALYTIC ACTIVITY</scope>
    <scope>BIOPHYSICOCHEMICAL PROPERTIES</scope>
</reference>
<reference key="26">
    <citation type="journal article" date="2007" name="Pharmacogenet. Genomics">
        <title>Functional characterization of the A411T (L137F) and G364A (D122N) genetic polymorphisms in human N-acetyltransferase 2.</title>
        <authorList>
            <person name="Zang Y."/>
            <person name="Zhao S."/>
            <person name="Doll M.A."/>
            <person name="States J.C."/>
            <person name="Hein D.W."/>
        </authorList>
    </citation>
    <scope>CHARACTERIZATION OF VARIANTS THR-114; ASN-122; PHE-137 AND LYS-268</scope>
</reference>
<reference key="27">
    <citation type="journal article" date="2008" name="BMC Genet.">
        <title>Worldwide distribution of NAT2 diversity: implications for NAT2 evolutionary history.</title>
        <authorList>
            <person name="Sabbagh A."/>
            <person name="Langaney A."/>
            <person name="Darlu P."/>
            <person name="Gerard N."/>
            <person name="Krishnamoorthy R."/>
            <person name="Poloni E.S."/>
        </authorList>
    </citation>
    <scope>VARIANTS GLN-64; THR-114; VAL-135; GLN-197; ASP-203; LEU-213; LYS-268; MET-280 AND GLU-286</scope>
</reference>
<keyword id="KW-0002">3D-structure</keyword>
<keyword id="KW-0012">Acyltransferase</keyword>
<keyword id="KW-0963">Cytoplasm</keyword>
<keyword id="KW-0903">Direct protein sequencing</keyword>
<keyword id="KW-1267">Proteomics identification</keyword>
<keyword id="KW-1185">Reference proteome</keyword>
<keyword id="KW-0808">Transferase</keyword>
<feature type="chain" id="PRO_0000107905" description="Arylamine N-acetyltransferase 2">
    <location>
        <begin position="1"/>
        <end position="290"/>
    </location>
</feature>
<feature type="active site" description="Acyl-thioester intermediate">
    <location>
        <position position="68"/>
    </location>
</feature>
<feature type="active site">
    <location>
        <position position="107"/>
    </location>
</feature>
<feature type="active site">
    <location>
        <position position="122"/>
    </location>
</feature>
<feature type="binding site" evidence="8">
    <location>
        <position position="103"/>
    </location>
    <ligand>
        <name>CoA</name>
        <dbReference type="ChEBI" id="CHEBI:57287"/>
    </ligand>
</feature>
<feature type="binding site" evidence="8">
    <location>
        <position position="104"/>
    </location>
    <ligand>
        <name>CoA</name>
        <dbReference type="ChEBI" id="CHEBI:57287"/>
    </ligand>
</feature>
<feature type="binding site" evidence="22">
    <location>
        <begin position="106"/>
        <end position="107"/>
    </location>
    <ligand>
        <name>substrate</name>
    </ligand>
</feature>
<feature type="binding site" evidence="8">
    <location>
        <position position="208"/>
    </location>
    <ligand>
        <name>CoA</name>
        <dbReference type="ChEBI" id="CHEBI:57287"/>
    </ligand>
</feature>
<feature type="binding site" evidence="8">
    <location>
        <position position="214"/>
    </location>
    <ligand>
        <name>CoA</name>
        <dbReference type="ChEBI" id="CHEBI:57287"/>
    </ligand>
</feature>
<feature type="binding site" evidence="8">
    <location>
        <position position="287"/>
    </location>
    <ligand>
        <name>CoA</name>
        <dbReference type="ChEBI" id="CHEBI:57287"/>
    </ligand>
</feature>
<feature type="sequence variant" id="VAR_018853" description="In allele NAT2*5L; dbSNP:rs45477599." evidence="6 18">
    <original>L</original>
    <variation>I</variation>
    <location>
        <position position="24"/>
    </location>
</feature>
<feature type="sequence variant" id="VAR_004608" description="In allele NAT2*14A, allele NAT2*14B, allele NAT2*14C, allele NAT2*14D, allele NAT2*14E, allele NAT2*14F and allele NAT2*14G; 5 to 6-fold lower Vmax and decreased arylamine N-acetyltransferase activity when associated in cis with K-268; dbSNP:rs1801279." evidence="2 6 9 13 18 20">
    <original>R</original>
    <variation>Q</variation>
    <location>
        <position position="64"/>
    </location>
</feature>
<feature type="sequence variant" id="VAR_009075" description="In allele NAT2*19; decreased arylamine N-acetyltransferase activity when associated in cis with K-268; decreased N-hydroxyarylamine O-acetyltransferase when associated in cis with K-268; dbSNP:rs1805158." evidence="1 3">
    <original>R</original>
    <variation>W</variation>
    <location>
        <position position="64"/>
    </location>
</feature>
<feature type="sequence variant" id="VAR_004609" description="In allele NAT2*5A, allele NAT2*5B, allele NAT2*5C, allele NAT2*5D, allele NAT2*5E, allele NAT2*5F, allele NAT2*5G, allele NAT2*5I, allele NAT2*5K, allele NAT2*5L, allele NAT2*5M, allele NAT2*14C and allele NAT2*14F; 7 to 12-fold lower Vmax; decreased arylamine N-acetyltransferase activity when associated in cis with K-268; loss of arylamine N-acetyltransferase activity when associated in cis with F-137; dbSNP:rs1801280." evidence="2 6 7 9 13 15 16 17 18 20 21">
    <original>I</original>
    <variation>T</variation>
    <location>
        <position position="114"/>
    </location>
</feature>
<feature type="sequence variant" id="VAR_020385" description="In allele NAT2*12D; loss of arylamine N-acetyltransferase activity; loss of arylamine N-acetyltransferase activity when associated in cis with K-268; dbSNP:rs4986996." evidence="7 17">
    <original>D</original>
    <variation>N</variation>
    <location>
        <position position="122"/>
    </location>
</feature>
<feature type="sequence variant" id="VAR_046905" description="In allele NAT2*12H; dbSNP:rs12720065." evidence="9">
    <original>L</original>
    <variation>V</variation>
    <location>
        <position position="135"/>
    </location>
</feature>
<feature type="sequence variant" id="VAR_020386" description="In allele NAT2*5I; loss of arylamine N-acetyltransferase activity when associated in cis with T-114; severely decreased arylamine N-acetyltransferase activity when associated in cis with K-268; dbSNP:rs4986997." evidence="7 17">
    <original>L</original>
    <variation>F</variation>
    <location>
        <position position="137"/>
    </location>
</feature>
<feature type="sequence variant" id="VAR_009076" description="In allele NAT2*17; loss of arylamine N-acetyltransferase activity when associated in cis with K-268; dbSNP:rs72554616." evidence="2 14">
    <original>Q</original>
    <variation>P</variation>
    <location>
        <position position="145"/>
    </location>
</feature>
<feature type="sequence variant" id="VAR_028781" description="In allele NAT2*12E; dbSNP:rs79050330." evidence="6">
    <original>T</original>
    <variation>M</variation>
    <location>
        <position position="193"/>
    </location>
</feature>
<feature type="sequence variant" id="VAR_004610" description="In allele NAT2*5E, allele NAT2*6A, allele NAT2*6B, allele NAT2*6C, allele NAT2*6D, allele NAT2*6J, allele NAT2*6K, allele NAT2*6L and allele NAT2*14D; decreased arylamine N-acetyltransferase activity when associated in cis with K-268; dbSNP:rs1799930." evidence="2 4 5 6 9 18 20">
    <original>R</original>
    <variation>Q</variation>
    <location>
        <position position="197"/>
    </location>
</feature>
<feature type="sequence variant" id="VAR_089009" description="In allele NAT2*12G; dbSNP:rs45618543." evidence="9">
    <original>E</original>
    <variation>D</variation>
    <location>
        <position position="203"/>
    </location>
</feature>
<feature type="sequence variant" id="VAR_028782" description="In allele NAT2*12F; dbSNP:rs56387565." evidence="6">
    <original>Y</original>
    <variation>H</variation>
    <location>
        <position position="208"/>
    </location>
</feature>
<feature type="sequence variant" id="VAR_089010" description="In allele NAT2*6K; dbSNP:rs138707146." evidence="9">
    <original>P</original>
    <variation>L</variation>
    <location>
        <position position="213"/>
    </location>
</feature>
<feature type="sequence variant" id="VAR_018854" description="In dbSNP:rs45518335." evidence="18">
    <original>P</original>
    <variation>L</variation>
    <location>
        <position position="228"/>
    </location>
</feature>
<feature type="sequence variant" id="VAR_004611" description="In allele NAT2*4, allele NAT2*5A, allele NAT2*5D, allele NAT2*5E, allele NAT2*5K, allele NAT2*6A, allele NAT2*6B, allele NAT2*6D, allele NAT2*6J, allele NAT2*6K, allele NAT2*6L, allele NAT2*7A, allele NAT2*7B, allele NAT2*13A, allele NAT2*14A, allele NAT2*14B, allele NAT2*14D, allele NAT2*17, allele NAT2*18 and allele NAT2*19; no effect on arylamine N-acetyltransferase activity; decreased arylamine N-acetyltransferase activity when associated in cis with W-64; decreased N-hydroxyarylamine O-acetyltransferase when associated in cis with W-64; 5 to 6-fold lower Vmax and decreased arylamine N-acetyltransferase activity when associated in cis with Q-64; decreased arylamine N-acetyltransferase activity when associated in cis with T-114; loss of arylamine N-acetyltransferase activity when associated in cis with N-122; severely decreased arylamine N-acetyltransferase activity when associated in cis with F-137; decreased arylamine N-acetyltransferase activity when associated in cis with Q-197; loss of arylamine N-acetyltransferase activity when associated in cis with P-145; no effect on arylamine N-acetyltransferase activity when associated in cis with T-282; no effect on arylamine N-acetyltransferase activity when associated in cis with E-286; dbSNP:rs1208." evidence="1 2 3 6 7 9 11 12 13 15 16 17 18 19 20">
    <original>R</original>
    <variation>K</variation>
    <location>
        <position position="268"/>
    </location>
</feature>
<feature type="sequence variant" id="VAR_061368" description="In allele NAT2*5M; dbSNP:rs56393504." evidence="9">
    <original>V</original>
    <variation>M</variation>
    <location>
        <position position="280"/>
    </location>
</feature>
<feature type="sequence variant" id="VAR_009077" description="In allele NAT2*18; no effect on arylamine N-acetyltransferase activity when associated in cis with K-268; dbSNP:rs56054745." evidence="2 14">
    <original>K</original>
    <variation>T</variation>
    <location>
        <position position="282"/>
    </location>
</feature>
<feature type="sequence variant" id="VAR_004612" description="In allele NAT2*6J, allele NAT2*7A and allele NAT2*7B; no effect on arylamine N-acetyltransferase activity when associated in cis with K-268; dbSNP:rs1799931." evidence="2 4 6 9 10 18">
    <original>G</original>
    <variation>E</variation>
    <location>
        <position position="286"/>
    </location>
</feature>
<feature type="sequence conflict" description="In Ref. 13; CAG28559." evidence="22" ref="13">
    <original>Y</original>
    <variation>D</variation>
    <location>
        <position position="6"/>
    </location>
</feature>
<feature type="sequence conflict" description="In Ref. 18; AA sequence." evidence="22" ref="18">
    <original>H</original>
    <variation>T</variation>
    <location>
        <position position="30"/>
    </location>
</feature>
<feature type="sequence conflict" description="In Ref. 9; AAG34181." evidence="22" ref="9">
    <original>G</original>
    <variation>R</variation>
    <location>
        <position position="286"/>
    </location>
</feature>
<feature type="helix" evidence="24">
    <location>
        <begin position="2"/>
        <end position="9"/>
    </location>
</feature>
<feature type="helix" evidence="24">
    <location>
        <begin position="21"/>
        <end position="34"/>
    </location>
</feature>
<feature type="helix" evidence="24">
    <location>
        <begin position="40"/>
        <end position="43"/>
    </location>
</feature>
<feature type="helix" evidence="24">
    <location>
        <begin position="52"/>
        <end position="59"/>
    </location>
</feature>
<feature type="helix" evidence="24">
    <location>
        <begin position="68"/>
        <end position="82"/>
    </location>
</feature>
<feature type="strand" evidence="24">
    <location>
        <begin position="85"/>
        <end position="95"/>
    </location>
</feature>
<feature type="helix" evidence="24">
    <location>
        <begin position="96"/>
        <end position="98"/>
    </location>
</feature>
<feature type="strand" evidence="24">
    <location>
        <begin position="107"/>
        <end position="114"/>
    </location>
</feature>
<feature type="strand" evidence="24">
    <location>
        <begin position="117"/>
        <end position="121"/>
    </location>
</feature>
<feature type="helix" evidence="24">
    <location>
        <begin position="127"/>
        <end position="129"/>
    </location>
</feature>
<feature type="strand" evidence="24">
    <location>
        <begin position="142"/>
        <end position="144"/>
    </location>
</feature>
<feature type="strand" evidence="24">
    <location>
        <begin position="149"/>
        <end position="155"/>
    </location>
</feature>
<feature type="strand" evidence="24">
    <location>
        <begin position="158"/>
        <end position="164"/>
    </location>
</feature>
<feature type="strand" evidence="24">
    <location>
        <begin position="167"/>
        <end position="171"/>
    </location>
</feature>
<feature type="helix" evidence="24">
    <location>
        <begin position="173"/>
        <end position="175"/>
    </location>
</feature>
<feature type="strand" evidence="24">
    <location>
        <begin position="185"/>
        <end position="192"/>
    </location>
</feature>
<feature type="helix" evidence="24">
    <location>
        <begin position="199"/>
        <end position="202"/>
    </location>
</feature>
<feature type="helix" evidence="24">
    <location>
        <begin position="203"/>
        <end position="211"/>
    </location>
</feature>
<feature type="helix" evidence="24">
    <location>
        <begin position="216"/>
        <end position="219"/>
    </location>
</feature>
<feature type="strand" evidence="24">
    <location>
        <begin position="222"/>
        <end position="226"/>
    </location>
</feature>
<feature type="strand" evidence="24">
    <location>
        <begin position="228"/>
        <end position="235"/>
    </location>
</feature>
<feature type="strand" evidence="24">
    <location>
        <begin position="238"/>
        <end position="247"/>
    </location>
</feature>
<feature type="strand" evidence="24">
    <location>
        <begin position="250"/>
        <end position="257"/>
    </location>
</feature>
<feature type="helix" evidence="24">
    <location>
        <begin position="260"/>
        <end position="269"/>
    </location>
</feature>
<feature type="strand" evidence="24">
    <location>
        <begin position="285"/>
        <end position="288"/>
    </location>
</feature>
<organism>
    <name type="scientific">Homo sapiens</name>
    <name type="common">Human</name>
    <dbReference type="NCBI Taxonomy" id="9606"/>
    <lineage>
        <taxon>Eukaryota</taxon>
        <taxon>Metazoa</taxon>
        <taxon>Chordata</taxon>
        <taxon>Craniata</taxon>
        <taxon>Vertebrata</taxon>
        <taxon>Euteleostomi</taxon>
        <taxon>Mammalia</taxon>
        <taxon>Eutheria</taxon>
        <taxon>Euarchontoglires</taxon>
        <taxon>Primates</taxon>
        <taxon>Haplorrhini</taxon>
        <taxon>Catarrhini</taxon>
        <taxon>Hominidae</taxon>
        <taxon>Homo</taxon>
    </lineage>
</organism>
<protein>
    <recommendedName>
        <fullName evidence="23">Arylamine N-acetyltransferase 2</fullName>
        <ecNumber evidence="3 13">2.3.1.5</ecNumber>
    </recommendedName>
    <alternativeName>
        <fullName>Arylamide acetylase 2</fullName>
    </alternativeName>
    <alternativeName>
        <fullName>N-acetyltransferase type 2</fullName>
        <shortName>NAT-2</shortName>
    </alternativeName>
    <alternativeName>
        <fullName evidence="23">N-hydroxyarylamine O-acetyltransferase</fullName>
        <ecNumber evidence="3 13">2.3.1.118</ecNumber>
    </alternativeName>
    <alternativeName>
        <fullName>Polymorphic arylamine N-acetyltransferase</fullName>
        <shortName>PNAT</shortName>
    </alternativeName>
</protein>
<comment type="function">
    <text evidence="3 13">Catalyzes the N- or O-acetylation of various arylamine and heterocyclic amine substrates (PubMed:12222688, PubMed:7915226). Participates in the detoxification of a plethora of hydrazine and arylamine drugs, and is able to bioactivate several known carcinogens.</text>
</comment>
<comment type="catalytic activity">
    <reaction evidence="3 13">
        <text>an arylamine + acetyl-CoA = an N-acetylarylamine + CoA</text>
        <dbReference type="Rhea" id="RHEA:16613"/>
        <dbReference type="ChEBI" id="CHEBI:13790"/>
        <dbReference type="ChEBI" id="CHEBI:50471"/>
        <dbReference type="ChEBI" id="CHEBI:57287"/>
        <dbReference type="ChEBI" id="CHEBI:57288"/>
        <dbReference type="EC" id="2.3.1.5"/>
    </reaction>
</comment>
<comment type="catalytic activity">
    <reaction evidence="3 13">
        <text>an N-hydroxyarylamine + acetyl-CoA = an N-acetoxyarylamine + CoA</text>
        <dbReference type="Rhea" id="RHEA:20277"/>
        <dbReference type="ChEBI" id="CHEBI:13792"/>
        <dbReference type="ChEBI" id="CHEBI:21494"/>
        <dbReference type="ChEBI" id="CHEBI:57287"/>
        <dbReference type="ChEBI" id="CHEBI:57288"/>
        <dbReference type="EC" id="2.3.1.118"/>
    </reaction>
</comment>
<comment type="biophysicochemical properties">
    <kinetics>
        <KM evidence="13">8.21 uM for 2-aminofluorene (measured with the enzyme encoded by allele NAT2*4)</KM>
        <KM evidence="13">15.9 uM for 4-aminobiphenyl (measured with the enzyme encoded by allele NAT2*4)</KM>
        <KM evidence="13">28.6 uM for 3,2-dimethyl-4-aminobiphenyl (measured with the enzyme encoded by allele NAT2*4)</KM>
        <KM evidence="13">355 uM for acetyl-CoA (measured with the enzyme encoded by allele NAT2*4)</KM>
        <KM evidence="3">483 uM for sulfamethazine (measured with the enzyme encoded by allele NAT2*4)</KM>
        <Vmax evidence="3">1545.0 nmol/min/mg enzyme for N-acetyltransferase activity toward sulfamethazine (measured with the enzyme encoded by allele NAT2*4)</Vmax>
    </kinetics>
</comment>
<comment type="interaction">
    <interactant intactId="EBI-9057228">
        <id>P11245</id>
    </interactant>
    <interactant intactId="EBI-495465">
        <id>Q13315</id>
        <label>ATM</label>
    </interactant>
    <organismsDiffer>false</organismsDiffer>
    <experiments>2</experiments>
</comment>
<comment type="interaction">
    <interactant intactId="EBI-9057228">
        <id>P11245</id>
    </interactant>
    <interactant intactId="EBI-6448717">
        <id>O95243-2</id>
        <label>MBD4</label>
    </interactant>
    <organismsDiffer>false</organismsDiffer>
    <experiments>3</experiments>
</comment>
<comment type="interaction">
    <interactant intactId="EBI-9057228">
        <id>P11245</id>
    </interactant>
    <interactant intactId="EBI-297202">
        <id>Q06609</id>
        <label>RAD51</label>
    </interactant>
    <organismsDiffer>false</organismsDiffer>
    <experiments>4</experiments>
</comment>
<comment type="subcellular location">
    <subcellularLocation>
        <location>Cytoplasm</location>
    </subcellularLocation>
</comment>
<comment type="polymorphism">
    <text evidence="1 2 3 4 6 7 9 12 13 15 16 17 18 19 20">Genetic variations in NAT2 determine the rate of acetylation of various arylamine and heterocyclic amine substrates that include therapeutic and carcinogenic agents. They influence drug therapy response and susceptibility to chemical toxicity [MIM:243400]. Different alleles are known, whose combination defines the rapid, intermediate and slow acetylator phenotypes. Allele NAT2*4 sequence is historically considered as the reference in most publications. The sequence shown in this entry corresponds to the translation of allele NAT2*12A, which is the one represented in the human reference genome (GRCh38/hg38 assembly) and has an arginine at position 268 (Ref.7). The enzyme encoded by allele NAT2*4 differs by the variant p.Arg268Lys (PubMed:2734109). The two alloenzymes have comparable arylamine N-acetyltransferase activity (PubMed:11337936).</text>
</comment>
<comment type="similarity">
    <text evidence="22">Belongs to the arylamine N-acetyltransferase family.</text>
</comment>
<comment type="sequence caution" evidence="22">
    <conflict type="frameshift">
        <sequence resource="EMBL-CDS" id="AAK51711"/>
    </conflict>
</comment>
<comment type="online information" name="Atlas of Genetics and Cytogenetics in Oncology and Haematology">
    <link uri="https://atlasgeneticsoncology.org/gene/41498/NAT2"/>
</comment>
<comment type="online information" name="NAT">
    <link uri="https://nat.mbg.duth.gr/"/>
    <text>NAT alleles</text>
</comment>